<comment type="function">
    <text evidence="1">Catalyzes the reversible cyclization of carbamoyl aspartate to dihydroorotate.</text>
</comment>
<comment type="catalytic activity">
    <reaction evidence="1">
        <text>(S)-dihydroorotate + H2O = N-carbamoyl-L-aspartate + H(+)</text>
        <dbReference type="Rhea" id="RHEA:24296"/>
        <dbReference type="ChEBI" id="CHEBI:15377"/>
        <dbReference type="ChEBI" id="CHEBI:15378"/>
        <dbReference type="ChEBI" id="CHEBI:30864"/>
        <dbReference type="ChEBI" id="CHEBI:32814"/>
        <dbReference type="EC" id="3.5.2.3"/>
    </reaction>
</comment>
<comment type="cofactor">
    <cofactor evidence="1">
        <name>Zn(2+)</name>
        <dbReference type="ChEBI" id="CHEBI:29105"/>
    </cofactor>
    <text evidence="1">Binds 2 Zn(2+) ions per subunit.</text>
</comment>
<comment type="pathway">
    <text evidence="1">Pyrimidine metabolism; UMP biosynthesis via de novo pathway; (S)-dihydroorotate from bicarbonate: step 3/3.</text>
</comment>
<comment type="subunit">
    <text evidence="1">Homodimer.</text>
</comment>
<comment type="similarity">
    <text evidence="1">Belongs to the metallo-dependent hydrolases superfamily. DHOase family. Class II DHOase subfamily.</text>
</comment>
<sequence length="345" mass="37649">MTQLTIITPDDWHLHFRDGDMLQETVPATARLFNRAIVMPNLLPPVTDAKLASAYRERILAARPAGSTFEPLMTIFLTNNTTEQDIIDAKAAGVVAAKLYPAGATTNSDAAVKALDALFPIFEAMEKHGLLLLVHGEVTESHIDIFDREALFIERYLARIVNAFPGLKVVFEHITTKDAADFVMSAADNVAATITPQHLLLNRNDLLVGGVRPHNFCLPVLKRSTHQEALRAVVATGSSKFFLGTDSAPHEKHRKESACGCAGCYSAWSALELYAQVFDDLGALDKLEGFASIHGPDFYGLPRNTGSVTLVKETWTVPSEIILPNGNPIVPFFAGEEVSWKVKTA</sequence>
<gene>
    <name evidence="1" type="primary">pyrC</name>
    <name type="ordered locus">swp_4128</name>
</gene>
<dbReference type="EC" id="3.5.2.3" evidence="1"/>
<dbReference type="EMBL" id="CP000472">
    <property type="protein sequence ID" value="ACJ30791.1"/>
    <property type="molecule type" value="Genomic_DNA"/>
</dbReference>
<dbReference type="RefSeq" id="WP_020914131.1">
    <property type="nucleotide sequence ID" value="NC_011566.1"/>
</dbReference>
<dbReference type="SMR" id="B8CT15"/>
<dbReference type="STRING" id="225849.swp_4128"/>
<dbReference type="MEROPS" id="M38.A02"/>
<dbReference type="KEGG" id="swp:swp_4128"/>
<dbReference type="eggNOG" id="COG0418">
    <property type="taxonomic scope" value="Bacteria"/>
</dbReference>
<dbReference type="HOGENOM" id="CLU_041558_1_0_6"/>
<dbReference type="OrthoDB" id="9808095at2"/>
<dbReference type="UniPathway" id="UPA00070">
    <property type="reaction ID" value="UER00117"/>
</dbReference>
<dbReference type="Proteomes" id="UP000000753">
    <property type="component" value="Chromosome"/>
</dbReference>
<dbReference type="GO" id="GO:0005829">
    <property type="term" value="C:cytosol"/>
    <property type="evidence" value="ECO:0007669"/>
    <property type="project" value="TreeGrafter"/>
</dbReference>
<dbReference type="GO" id="GO:0004151">
    <property type="term" value="F:dihydroorotase activity"/>
    <property type="evidence" value="ECO:0007669"/>
    <property type="project" value="UniProtKB-UniRule"/>
</dbReference>
<dbReference type="GO" id="GO:0008270">
    <property type="term" value="F:zinc ion binding"/>
    <property type="evidence" value="ECO:0007669"/>
    <property type="project" value="UniProtKB-UniRule"/>
</dbReference>
<dbReference type="GO" id="GO:0006207">
    <property type="term" value="P:'de novo' pyrimidine nucleobase biosynthetic process"/>
    <property type="evidence" value="ECO:0007669"/>
    <property type="project" value="TreeGrafter"/>
</dbReference>
<dbReference type="GO" id="GO:0044205">
    <property type="term" value="P:'de novo' UMP biosynthetic process"/>
    <property type="evidence" value="ECO:0007669"/>
    <property type="project" value="UniProtKB-UniRule"/>
</dbReference>
<dbReference type="CDD" id="cd01294">
    <property type="entry name" value="DHOase"/>
    <property type="match status" value="1"/>
</dbReference>
<dbReference type="FunFam" id="3.20.20.140:FF:000006">
    <property type="entry name" value="Dihydroorotase"/>
    <property type="match status" value="1"/>
</dbReference>
<dbReference type="Gene3D" id="3.20.20.140">
    <property type="entry name" value="Metal-dependent hydrolases"/>
    <property type="match status" value="1"/>
</dbReference>
<dbReference type="HAMAP" id="MF_00219">
    <property type="entry name" value="PyrC_classII"/>
    <property type="match status" value="1"/>
</dbReference>
<dbReference type="InterPro" id="IPR006680">
    <property type="entry name" value="Amidohydro-rel"/>
</dbReference>
<dbReference type="InterPro" id="IPR004721">
    <property type="entry name" value="DHOdimr"/>
</dbReference>
<dbReference type="InterPro" id="IPR002195">
    <property type="entry name" value="Dihydroorotase_CS"/>
</dbReference>
<dbReference type="InterPro" id="IPR032466">
    <property type="entry name" value="Metal_Hydrolase"/>
</dbReference>
<dbReference type="NCBIfam" id="TIGR00856">
    <property type="entry name" value="pyrC_dimer"/>
    <property type="match status" value="1"/>
</dbReference>
<dbReference type="PANTHER" id="PTHR43137">
    <property type="entry name" value="DIHYDROOROTASE"/>
    <property type="match status" value="1"/>
</dbReference>
<dbReference type="PANTHER" id="PTHR43137:SF1">
    <property type="entry name" value="DIHYDROOROTASE"/>
    <property type="match status" value="1"/>
</dbReference>
<dbReference type="Pfam" id="PF01979">
    <property type="entry name" value="Amidohydro_1"/>
    <property type="match status" value="1"/>
</dbReference>
<dbReference type="PIRSF" id="PIRSF001237">
    <property type="entry name" value="DHOdimr"/>
    <property type="match status" value="1"/>
</dbReference>
<dbReference type="SUPFAM" id="SSF51556">
    <property type="entry name" value="Metallo-dependent hydrolases"/>
    <property type="match status" value="1"/>
</dbReference>
<dbReference type="PROSITE" id="PS00482">
    <property type="entry name" value="DIHYDROOROTASE_1"/>
    <property type="match status" value="1"/>
</dbReference>
<dbReference type="PROSITE" id="PS00483">
    <property type="entry name" value="DIHYDROOROTASE_2"/>
    <property type="match status" value="1"/>
</dbReference>
<keyword id="KW-0378">Hydrolase</keyword>
<keyword id="KW-0479">Metal-binding</keyword>
<keyword id="KW-0665">Pyrimidine biosynthesis</keyword>
<keyword id="KW-0862">Zinc</keyword>
<organism>
    <name type="scientific">Shewanella piezotolerans (strain WP3 / JCM 13877)</name>
    <dbReference type="NCBI Taxonomy" id="225849"/>
    <lineage>
        <taxon>Bacteria</taxon>
        <taxon>Pseudomonadati</taxon>
        <taxon>Pseudomonadota</taxon>
        <taxon>Gammaproteobacteria</taxon>
        <taxon>Alteromonadales</taxon>
        <taxon>Shewanellaceae</taxon>
        <taxon>Shewanella</taxon>
    </lineage>
</organism>
<protein>
    <recommendedName>
        <fullName evidence="1">Dihydroorotase</fullName>
        <shortName evidence="1">DHOase</shortName>
        <ecNumber evidence="1">3.5.2.3</ecNumber>
    </recommendedName>
</protein>
<feature type="chain" id="PRO_1000193083" description="Dihydroorotase">
    <location>
        <begin position="1"/>
        <end position="345"/>
    </location>
</feature>
<feature type="active site" evidence="1">
    <location>
        <position position="246"/>
    </location>
</feature>
<feature type="binding site" evidence="1">
    <location>
        <position position="13"/>
    </location>
    <ligand>
        <name>Zn(2+)</name>
        <dbReference type="ChEBI" id="CHEBI:29105"/>
        <label>1</label>
    </ligand>
</feature>
<feature type="binding site" evidence="1">
    <location>
        <begin position="15"/>
        <end position="17"/>
    </location>
    <ligand>
        <name>substrate</name>
    </ligand>
</feature>
<feature type="binding site" evidence="1">
    <location>
        <position position="15"/>
    </location>
    <ligand>
        <name>Zn(2+)</name>
        <dbReference type="ChEBI" id="CHEBI:29105"/>
        <label>1</label>
    </ligand>
</feature>
<feature type="binding site" evidence="1">
    <location>
        <position position="41"/>
    </location>
    <ligand>
        <name>substrate</name>
    </ligand>
</feature>
<feature type="binding site" description="via carbamate group" evidence="1">
    <location>
        <position position="98"/>
    </location>
    <ligand>
        <name>Zn(2+)</name>
        <dbReference type="ChEBI" id="CHEBI:29105"/>
        <label>1</label>
    </ligand>
</feature>
<feature type="binding site" description="via carbamate group" evidence="1">
    <location>
        <position position="98"/>
    </location>
    <ligand>
        <name>Zn(2+)</name>
        <dbReference type="ChEBI" id="CHEBI:29105"/>
        <label>2</label>
    </ligand>
</feature>
<feature type="binding site" evidence="1">
    <location>
        <position position="135"/>
    </location>
    <ligand>
        <name>substrate</name>
    </ligand>
</feature>
<feature type="binding site" evidence="1">
    <location>
        <position position="135"/>
    </location>
    <ligand>
        <name>Zn(2+)</name>
        <dbReference type="ChEBI" id="CHEBI:29105"/>
        <label>2</label>
    </ligand>
</feature>
<feature type="binding site" evidence="1">
    <location>
        <position position="173"/>
    </location>
    <ligand>
        <name>Zn(2+)</name>
        <dbReference type="ChEBI" id="CHEBI:29105"/>
        <label>2</label>
    </ligand>
</feature>
<feature type="binding site" evidence="1">
    <location>
        <position position="218"/>
    </location>
    <ligand>
        <name>substrate</name>
    </ligand>
</feature>
<feature type="binding site" evidence="1">
    <location>
        <position position="246"/>
    </location>
    <ligand>
        <name>Zn(2+)</name>
        <dbReference type="ChEBI" id="CHEBI:29105"/>
        <label>1</label>
    </ligand>
</feature>
<feature type="binding site" evidence="1">
    <location>
        <position position="250"/>
    </location>
    <ligand>
        <name>substrate</name>
    </ligand>
</feature>
<feature type="binding site" evidence="1">
    <location>
        <position position="262"/>
    </location>
    <ligand>
        <name>substrate</name>
    </ligand>
</feature>
<feature type="modified residue" description="N6-carboxylysine" evidence="1">
    <location>
        <position position="98"/>
    </location>
</feature>
<accession>B8CT15</accession>
<name>PYRC_SHEPW</name>
<evidence type="ECO:0000255" key="1">
    <source>
        <dbReference type="HAMAP-Rule" id="MF_00219"/>
    </source>
</evidence>
<reference key="1">
    <citation type="journal article" date="2008" name="PLoS ONE">
        <title>Environmental adaptation: genomic analysis of the piezotolerant and psychrotolerant deep-sea iron reducing bacterium Shewanella piezotolerans WP3.</title>
        <authorList>
            <person name="Wang F."/>
            <person name="Wang J."/>
            <person name="Jian H."/>
            <person name="Zhang B."/>
            <person name="Li S."/>
            <person name="Wang F."/>
            <person name="Zeng X."/>
            <person name="Gao L."/>
            <person name="Bartlett D.H."/>
            <person name="Yu J."/>
            <person name="Hu S."/>
            <person name="Xiao X."/>
        </authorList>
    </citation>
    <scope>NUCLEOTIDE SEQUENCE [LARGE SCALE GENOMIC DNA]</scope>
    <source>
        <strain>WP3 / JCM 13877</strain>
    </source>
</reference>
<proteinExistence type="inferred from homology"/>